<keyword id="KW-0927">Auxin signaling pathway</keyword>
<keyword id="KW-0539">Nucleus</keyword>
<keyword id="KW-1185">Reference proteome</keyword>
<keyword id="KW-0678">Repressor</keyword>
<keyword id="KW-0804">Transcription</keyword>
<keyword id="KW-0805">Transcription regulation</keyword>
<sequence>MAGADVDVGTELRLGLPGGGGGAAEAAAKAAKRGFEETIDLKLKLPTAGMEEAAAGKAEAPAAEKAKRPAEAAAADAEKPPAPKAQAVGWPPVRSFRRNIMTVQSVKSKKEEEADKQQQQPAANASGSNSSAFVKVSMDGAPYLRKVDLKMYNSYKDLSLALQKMFGTFTATGNNMNEVNGSDAVTTYEDKDGDWMLVGDVPWQMFVESCKRLRIMKGSEAIGLAPRAKDKYKNKS</sequence>
<reference key="1">
    <citation type="journal article" date="2001" name="DNA Res.">
        <title>OsIAA1, an Aux/IAA cDNA from rice, and changes in its expression as influenced by auxin and light.</title>
        <authorList>
            <person name="Thakur J.K."/>
            <person name="Tyagi A.K."/>
            <person name="Khurana J.P."/>
        </authorList>
    </citation>
    <scope>NUCLEOTIDE SEQUENCE [MRNA]</scope>
    <scope>INDUCTION</scope>
    <scope>TISSUE SPECIFICITY</scope>
    <source>
        <strain>cv. Pusa Basmati</strain>
        <tissue>Root</tissue>
    </source>
</reference>
<reference key="2">
    <citation type="journal article" date="2005" name="Biochim. Biophys. Acta">
        <title>Exogenous auxin enhances the degradation of a light down-regulated and nuclear-localized OsiIAA1, an Aux/IAA protein from rice, via proteasome.</title>
        <authorList>
            <person name="Thakur J.K."/>
            <person name="Jain M."/>
            <person name="Tyagi A.K."/>
            <person name="Khurana J.P."/>
        </authorList>
    </citation>
    <scope>NUCLEOTIDE SEQUENCE [GENOMIC DNA]</scope>
    <scope>SUBCELLULAR LOCATION</scope>
    <scope>INDUCTION</scope>
</reference>
<reference key="3">
    <citation type="journal article" date="2005" name="PLoS Biol.">
        <title>The genomes of Oryza sativa: a history of duplications.</title>
        <authorList>
            <person name="Yu J."/>
            <person name="Wang J."/>
            <person name="Lin W."/>
            <person name="Li S."/>
            <person name="Li H."/>
            <person name="Zhou J."/>
            <person name="Ni P."/>
            <person name="Dong W."/>
            <person name="Hu S."/>
            <person name="Zeng C."/>
            <person name="Zhang J."/>
            <person name="Zhang Y."/>
            <person name="Li R."/>
            <person name="Xu Z."/>
            <person name="Li S."/>
            <person name="Li X."/>
            <person name="Zheng H."/>
            <person name="Cong L."/>
            <person name="Lin L."/>
            <person name="Yin J."/>
            <person name="Geng J."/>
            <person name="Li G."/>
            <person name="Shi J."/>
            <person name="Liu J."/>
            <person name="Lv H."/>
            <person name="Li J."/>
            <person name="Wang J."/>
            <person name="Deng Y."/>
            <person name="Ran L."/>
            <person name="Shi X."/>
            <person name="Wang X."/>
            <person name="Wu Q."/>
            <person name="Li C."/>
            <person name="Ren X."/>
            <person name="Wang J."/>
            <person name="Wang X."/>
            <person name="Li D."/>
            <person name="Liu D."/>
            <person name="Zhang X."/>
            <person name="Ji Z."/>
            <person name="Zhao W."/>
            <person name="Sun Y."/>
            <person name="Zhang Z."/>
            <person name="Bao J."/>
            <person name="Han Y."/>
            <person name="Dong L."/>
            <person name="Ji J."/>
            <person name="Chen P."/>
            <person name="Wu S."/>
            <person name="Liu J."/>
            <person name="Xiao Y."/>
            <person name="Bu D."/>
            <person name="Tan J."/>
            <person name="Yang L."/>
            <person name="Ye C."/>
            <person name="Zhang J."/>
            <person name="Xu J."/>
            <person name="Zhou Y."/>
            <person name="Yu Y."/>
            <person name="Zhang B."/>
            <person name="Zhuang S."/>
            <person name="Wei H."/>
            <person name="Liu B."/>
            <person name="Lei M."/>
            <person name="Yu H."/>
            <person name="Li Y."/>
            <person name="Xu H."/>
            <person name="Wei S."/>
            <person name="He X."/>
            <person name="Fang L."/>
            <person name="Zhang Z."/>
            <person name="Zhang Y."/>
            <person name="Huang X."/>
            <person name="Su Z."/>
            <person name="Tong W."/>
            <person name="Li J."/>
            <person name="Tong Z."/>
            <person name="Li S."/>
            <person name="Ye J."/>
            <person name="Wang L."/>
            <person name="Fang L."/>
            <person name="Lei T."/>
            <person name="Chen C.-S."/>
            <person name="Chen H.-C."/>
            <person name="Xu Z."/>
            <person name="Li H."/>
            <person name="Huang H."/>
            <person name="Zhang F."/>
            <person name="Xu H."/>
            <person name="Li N."/>
            <person name="Zhao C."/>
            <person name="Li S."/>
            <person name="Dong L."/>
            <person name="Huang Y."/>
            <person name="Li L."/>
            <person name="Xi Y."/>
            <person name="Qi Q."/>
            <person name="Li W."/>
            <person name="Zhang B."/>
            <person name="Hu W."/>
            <person name="Zhang Y."/>
            <person name="Tian X."/>
            <person name="Jiao Y."/>
            <person name="Liang X."/>
            <person name="Jin J."/>
            <person name="Gao L."/>
            <person name="Zheng W."/>
            <person name="Hao B."/>
            <person name="Liu S.-M."/>
            <person name="Wang W."/>
            <person name="Yuan L."/>
            <person name="Cao M."/>
            <person name="McDermott J."/>
            <person name="Samudrala R."/>
            <person name="Wang J."/>
            <person name="Wong G.K.-S."/>
            <person name="Yang H."/>
        </authorList>
    </citation>
    <scope>NUCLEOTIDE SEQUENCE [LARGE SCALE GENOMIC DNA]</scope>
    <source>
        <strain>cv. 93-11</strain>
    </source>
</reference>
<reference key="4">
    <citation type="journal article" date="2006" name="Funct. Integr. Genomics">
        <title>Structure and expression analysis of early auxin-responsive Aux/IAA gene family in rice (Oryza sativa).</title>
        <authorList>
            <person name="Jain M."/>
            <person name="Kaur N."/>
            <person name="Garg R."/>
            <person name="Thakur J.K."/>
            <person name="Tyagi A.K."/>
            <person name="Khurana J.P."/>
        </authorList>
    </citation>
    <scope>TISSUE SPECIFICITY</scope>
    <scope>INDUCTION</scope>
    <scope>NOMENCLATURE</scope>
</reference>
<comment type="function">
    <text evidence="1">Aux/IAA proteins are short-lived transcriptional factors that function as repressors of early auxin response genes at low auxin concentrations.</text>
</comment>
<comment type="subunit">
    <text evidence="1">Homodimers and heterodimers.</text>
</comment>
<comment type="subcellular location">
    <subcellularLocation>
        <location evidence="5">Nucleus</location>
    </subcellularLocation>
</comment>
<comment type="tissue specificity">
    <text evidence="4 6">Highly expressed in etiolated seedlings. Expressed in roots and flowers.</text>
</comment>
<comment type="induction">
    <text evidence="4 5 6">By auxin. Down-regulated by auxin depletion, and light in dark-grown seedlings.</text>
</comment>
<comment type="similarity">
    <text evidence="7">Belongs to the Aux/IAA family.</text>
</comment>
<protein>
    <recommendedName>
        <fullName>Auxin-responsive protein IAA13</fullName>
    </recommendedName>
    <alternativeName>
        <fullName>Indoleacetic acid-induced protein 13</fullName>
    </alternativeName>
</protein>
<evidence type="ECO:0000250" key="1"/>
<evidence type="ECO:0000255" key="2">
    <source>
        <dbReference type="PROSITE-ProRule" id="PRU01081"/>
    </source>
</evidence>
<evidence type="ECO:0000256" key="3">
    <source>
        <dbReference type="SAM" id="MobiDB-lite"/>
    </source>
</evidence>
<evidence type="ECO:0000269" key="4">
    <source>
    </source>
</evidence>
<evidence type="ECO:0000269" key="5">
    <source>
    </source>
</evidence>
<evidence type="ECO:0000269" key="6">
    <source>
    </source>
</evidence>
<evidence type="ECO:0000305" key="7"/>
<name>IAA13_ORYSI</name>
<organism>
    <name type="scientific">Oryza sativa subsp. indica</name>
    <name type="common">Rice</name>
    <dbReference type="NCBI Taxonomy" id="39946"/>
    <lineage>
        <taxon>Eukaryota</taxon>
        <taxon>Viridiplantae</taxon>
        <taxon>Streptophyta</taxon>
        <taxon>Embryophyta</taxon>
        <taxon>Tracheophyta</taxon>
        <taxon>Spermatophyta</taxon>
        <taxon>Magnoliopsida</taxon>
        <taxon>Liliopsida</taxon>
        <taxon>Poales</taxon>
        <taxon>Poaceae</taxon>
        <taxon>BOP clade</taxon>
        <taxon>Oryzoideae</taxon>
        <taxon>Oryzeae</taxon>
        <taxon>Oryzinae</taxon>
        <taxon>Oryza</taxon>
        <taxon>Oryza sativa</taxon>
    </lineage>
</organism>
<feature type="chain" id="PRO_0000291398" description="Auxin-responsive protein IAA13">
    <location>
        <begin position="1"/>
        <end position="236"/>
    </location>
</feature>
<feature type="domain" description="PB1" evidence="2">
    <location>
        <begin position="131"/>
        <end position="218"/>
    </location>
</feature>
<feature type="region of interest" description="Disordered" evidence="3">
    <location>
        <begin position="1"/>
        <end position="24"/>
    </location>
</feature>
<feature type="region of interest" description="Disordered" evidence="3">
    <location>
        <begin position="52"/>
        <end position="93"/>
    </location>
</feature>
<feature type="region of interest" description="Disordered" evidence="3">
    <location>
        <begin position="105"/>
        <end position="130"/>
    </location>
</feature>
<feature type="short sequence motif" description="EAR-like (transcriptional repression)" evidence="1">
    <location>
        <begin position="12"/>
        <end position="16"/>
    </location>
</feature>
<feature type="compositionally biased region" description="Low complexity" evidence="3">
    <location>
        <begin position="52"/>
        <end position="61"/>
    </location>
</feature>
<feature type="compositionally biased region" description="Basic and acidic residues" evidence="3">
    <location>
        <begin position="62"/>
        <end position="81"/>
    </location>
</feature>
<feature type="compositionally biased region" description="Low complexity" evidence="3">
    <location>
        <begin position="117"/>
        <end position="130"/>
    </location>
</feature>
<feature type="sequence conflict" description="In Ref. 1; CAC80823." evidence="7" ref="1">
    <original>V</original>
    <variation>G</variation>
    <location>
        <position position="185"/>
    </location>
</feature>
<proteinExistence type="evidence at transcript level"/>
<dbReference type="EMBL" id="AJ251791">
    <property type="protein sequence ID" value="CAC80823.1"/>
    <property type="molecule type" value="mRNA"/>
</dbReference>
<dbReference type="EMBL" id="AJ563599">
    <property type="protein sequence ID" value="CAD91549.1"/>
    <property type="molecule type" value="Genomic_DNA"/>
</dbReference>
<dbReference type="EMBL" id="CM000128">
    <property type="protein sequence ID" value="EAY91819.1"/>
    <property type="molecule type" value="Genomic_DNA"/>
</dbReference>
<dbReference type="SMR" id="A2XLV9"/>
<dbReference type="STRING" id="39946.A2XLV9"/>
<dbReference type="EnsemblPlants" id="BGIOSGA009837-TA">
    <property type="protein sequence ID" value="BGIOSGA009837-PA"/>
    <property type="gene ID" value="BGIOSGA009837"/>
</dbReference>
<dbReference type="Gramene" id="BGIOSGA009837-TA">
    <property type="protein sequence ID" value="BGIOSGA009837-PA"/>
    <property type="gene ID" value="BGIOSGA009837"/>
</dbReference>
<dbReference type="HOGENOM" id="CLU_049393_1_5_1"/>
<dbReference type="OMA" id="IALHKMF"/>
<dbReference type="Proteomes" id="UP000007015">
    <property type="component" value="Chromosome 3"/>
</dbReference>
<dbReference type="GO" id="GO:0005634">
    <property type="term" value="C:nucleus"/>
    <property type="evidence" value="ECO:0007669"/>
    <property type="project" value="UniProtKB-SubCell"/>
</dbReference>
<dbReference type="GO" id="GO:0009734">
    <property type="term" value="P:auxin-activated signaling pathway"/>
    <property type="evidence" value="ECO:0007669"/>
    <property type="project" value="UniProtKB-KW"/>
</dbReference>
<dbReference type="GO" id="GO:0006355">
    <property type="term" value="P:regulation of DNA-templated transcription"/>
    <property type="evidence" value="ECO:0007669"/>
    <property type="project" value="InterPro"/>
</dbReference>
<dbReference type="FunFam" id="3.10.20.90:FF:000078">
    <property type="entry name" value="Auxin-responsive protein"/>
    <property type="match status" value="1"/>
</dbReference>
<dbReference type="Gene3D" id="3.10.20.90">
    <property type="entry name" value="Phosphatidylinositol 3-kinase Catalytic Subunit, Chain A, domain 1"/>
    <property type="match status" value="1"/>
</dbReference>
<dbReference type="InterPro" id="IPR033389">
    <property type="entry name" value="AUX/IAA_dom"/>
</dbReference>
<dbReference type="InterPro" id="IPR003311">
    <property type="entry name" value="AUX_IAA"/>
</dbReference>
<dbReference type="InterPro" id="IPR053793">
    <property type="entry name" value="PB1-like"/>
</dbReference>
<dbReference type="PANTHER" id="PTHR31734:SF28">
    <property type="entry name" value="AUXIN-RESPONSIVE PROTEIN IAA13"/>
    <property type="match status" value="1"/>
</dbReference>
<dbReference type="PANTHER" id="PTHR31734">
    <property type="entry name" value="AUXIN-RESPONSIVE PROTEIN IAA17"/>
    <property type="match status" value="1"/>
</dbReference>
<dbReference type="Pfam" id="PF02309">
    <property type="entry name" value="AUX_IAA"/>
    <property type="match status" value="1"/>
</dbReference>
<dbReference type="SUPFAM" id="SSF54277">
    <property type="entry name" value="CAD &amp; PB1 domains"/>
    <property type="match status" value="1"/>
</dbReference>
<dbReference type="PROSITE" id="PS51745">
    <property type="entry name" value="PB1"/>
    <property type="match status" value="1"/>
</dbReference>
<accession>A2XLV9</accession>
<accession>Q75KX2</accession>
<accession>Q75KX3</accession>
<accession>Q7Y1Y5</accession>
<accession>Q8VWE7</accession>
<gene>
    <name type="primary">IAA13</name>
    <name type="synonym">IAA1</name>
    <name type="ORF">OsI_013052</name>
</gene>